<evidence type="ECO:0000250" key="1">
    <source>
        <dbReference type="UniProtKB" id="P04798"/>
    </source>
</evidence>
<evidence type="ECO:0000256" key="2">
    <source>
        <dbReference type="SAM" id="MobiDB-lite"/>
    </source>
</evidence>
<evidence type="ECO:0000269" key="3">
    <source>
    </source>
</evidence>
<evidence type="ECO:0000303" key="4">
    <source>
    </source>
</evidence>
<evidence type="ECO:0000305" key="5"/>
<organism>
    <name type="scientific">Aspergillus campestris (strain IBT 28561)</name>
    <dbReference type="NCBI Taxonomy" id="1392248"/>
    <lineage>
        <taxon>Eukaryota</taxon>
        <taxon>Fungi</taxon>
        <taxon>Dikarya</taxon>
        <taxon>Ascomycota</taxon>
        <taxon>Pezizomycotina</taxon>
        <taxon>Eurotiomycetes</taxon>
        <taxon>Eurotiomycetidae</taxon>
        <taxon>Eurotiales</taxon>
        <taxon>Aspergillaceae</taxon>
        <taxon>Aspergillus</taxon>
        <taxon>Aspergillus subgen. Circumdati</taxon>
    </lineage>
</organism>
<sequence>MTDSGWKIILAPEYASEVRKFEEHGTVLSSKDQFHGDIPGFEPFNAGSLIELQLVKYMAKKSCSKSAGHVFSSLSLESGRVVQEMCSDDPNWRPIQAESTAVRMIAHLTAAVFAGRQLCRNSEWIDITIQYSLTAMVAAEQLWRWPRLARRMAARFLPSCRLLSAQVQRANELVSTTSQARKDETTATQQAGMEQSTSYHDGLEWMEEYARGRPYRPGVTQLAVTLGAVDTTKDLLMQVLYDIAGKSDLMDALRREIVAIVSEHGWTKTTIVNLQLMDSMIKESQRLKPVGISKLSGIRRTAASDIHLSDGGIVPKNVPFEISNMHMWDDADLYPDPLSFQADRFLRLRQVPGHEATAQLASLSADHLGWGLGKNACPGRFFVAMEVKVLLCHLILKYDWRLEDGCISEVRRYGTFLSADPEGTLLVRRRREEVDLDGPLV</sequence>
<name>CPSC_ASPC2</name>
<comment type="function">
    <text evidence="3">Cytochrome P450 monooxygenase; part of the gene cluster that mediates the biosynthesis of campesine G, a dimeric indole piperazine alkaloid that shows good insecticidal activity Galleria mellonella (PubMed:38527935). Within the pathway, cpsC catalyzes regioselective dehydrogenation reaction towards C2-N1 of the (2H)-indole ring of campesine D to yield the final product, campesine G (PubMed:38527935). The non-canonical non-ribosomal peptide synthetase cpsA catalyzes the first steps of the pathway by producing L-tryptophanal and L-valinal from their respective amino-acids. These products condensate spontaneously to form trypyl-valyl pyrazine also known as didehydrocampesine A. The NmrA-like family domain-containing oxidoreductase cpsB is the next enzyme in cps pathway and reduces the unstable didehydrocampesine A to campesine A. The methyltransferase cpsF and the acetyltransferase cpsE both recognize N13 of piperazine ring to carry out methylation and acetylation of campesine A to produce campesine C and B, respectively. The cytochrome P450 monooxygenase cpsD then acts as a dimerase that catalyzes oxidative heterocoupling between campesine B and C to produce heterodimers with unexpected 6/5/6/6/6/6/5/6 eight-ring scaffold called campesine D. Finally,the cytochrome P450 monooxygenase cpsC is a regioselective dehydrogenase that catalyzes dehydrogenation reaction towards C2-N1 to produce campesine G (PubMed:38527935).</text>
</comment>
<comment type="catalytic activity">
    <reaction evidence="3">
        <text>campesine D + reduced [NADPH--hemoprotein reductase] + O2 = campesine G + oxidized [NADPH--hemoprotein reductase] + 2 H2O + H(+)</text>
        <dbReference type="Rhea" id="RHEA:82843"/>
        <dbReference type="Rhea" id="RHEA-COMP:11964"/>
        <dbReference type="Rhea" id="RHEA-COMP:11965"/>
        <dbReference type="ChEBI" id="CHEBI:15377"/>
        <dbReference type="ChEBI" id="CHEBI:15378"/>
        <dbReference type="ChEBI" id="CHEBI:15379"/>
        <dbReference type="ChEBI" id="CHEBI:57618"/>
        <dbReference type="ChEBI" id="CHEBI:58210"/>
        <dbReference type="ChEBI" id="CHEBI:232513"/>
        <dbReference type="ChEBI" id="CHEBI:232517"/>
    </reaction>
    <physiologicalReaction direction="left-to-right" evidence="3">
        <dbReference type="Rhea" id="RHEA:82844"/>
    </physiologicalReaction>
</comment>
<comment type="cofactor">
    <cofactor evidence="1">
        <name>heme</name>
        <dbReference type="ChEBI" id="CHEBI:30413"/>
    </cofactor>
</comment>
<comment type="pathway">
    <text evidence="3">Alkaloid biosynthesis.</text>
</comment>
<comment type="biotechnology">
    <text evidence="3">Campesine G features good insecticidal activity against the global honeybee pest Galleria mellonella, which supports its future application in the development of biopesticides.</text>
</comment>
<comment type="similarity">
    <text evidence="5">Belongs to the cytochrome P450 family.</text>
</comment>
<comment type="sequence caution" evidence="5">
    <conflict type="erroneous gene model prediction">
        <sequence resource="EMBL-CDS" id="PKY00568"/>
    </conflict>
</comment>
<feature type="chain" id="PRO_0000461455" description="Cytochrome P450 monooxygenase cpsC">
    <location>
        <begin position="1"/>
        <end position="441"/>
    </location>
</feature>
<feature type="region of interest" description="Disordered" evidence="2">
    <location>
        <begin position="175"/>
        <end position="195"/>
    </location>
</feature>
<feature type="compositionally biased region" description="Polar residues" evidence="2">
    <location>
        <begin position="186"/>
        <end position="195"/>
    </location>
</feature>
<feature type="binding site" description="axial binding residue" evidence="1">
    <location>
        <position position="377"/>
    </location>
    <ligand>
        <name>heme</name>
        <dbReference type="ChEBI" id="CHEBI:30413"/>
    </ligand>
    <ligandPart>
        <name>Fe</name>
        <dbReference type="ChEBI" id="CHEBI:18248"/>
    </ligandPart>
</feature>
<keyword id="KW-0017">Alkaloid metabolism</keyword>
<keyword id="KW-0349">Heme</keyword>
<keyword id="KW-0408">Iron</keyword>
<keyword id="KW-0479">Metal-binding</keyword>
<keyword id="KW-0503">Monooxygenase</keyword>
<keyword id="KW-0560">Oxidoreductase</keyword>
<dbReference type="EC" id="1.-.-.-" evidence="3"/>
<dbReference type="EMBL" id="MSFM01000014">
    <property type="protein sequence ID" value="PKY00568.1"/>
    <property type="status" value="ALT_SEQ"/>
    <property type="molecule type" value="Genomic_DNA"/>
</dbReference>
<dbReference type="VEuPathDB" id="FungiDB:P168DRAFT_243945"/>
<dbReference type="OrthoDB" id="1844152at2759"/>
<dbReference type="Proteomes" id="UP000234254">
    <property type="component" value="Unassembled WGS sequence"/>
</dbReference>
<dbReference type="GO" id="GO:0020037">
    <property type="term" value="F:heme binding"/>
    <property type="evidence" value="ECO:0007669"/>
    <property type="project" value="InterPro"/>
</dbReference>
<dbReference type="GO" id="GO:0005506">
    <property type="term" value="F:iron ion binding"/>
    <property type="evidence" value="ECO:0007669"/>
    <property type="project" value="InterPro"/>
</dbReference>
<dbReference type="GO" id="GO:0004497">
    <property type="term" value="F:monooxygenase activity"/>
    <property type="evidence" value="ECO:0007669"/>
    <property type="project" value="UniProtKB-KW"/>
</dbReference>
<dbReference type="GO" id="GO:0016705">
    <property type="term" value="F:oxidoreductase activity, acting on paired donors, with incorporation or reduction of molecular oxygen"/>
    <property type="evidence" value="ECO:0007669"/>
    <property type="project" value="InterPro"/>
</dbReference>
<dbReference type="GO" id="GO:0009820">
    <property type="term" value="P:alkaloid metabolic process"/>
    <property type="evidence" value="ECO:0007669"/>
    <property type="project" value="UniProtKB-KW"/>
</dbReference>
<dbReference type="GO" id="GO:0019748">
    <property type="term" value="P:secondary metabolic process"/>
    <property type="evidence" value="ECO:0007669"/>
    <property type="project" value="UniProtKB-ARBA"/>
</dbReference>
<dbReference type="CDD" id="cd11041">
    <property type="entry name" value="CYP503A1-like"/>
    <property type="match status" value="1"/>
</dbReference>
<dbReference type="Gene3D" id="1.10.630.10">
    <property type="entry name" value="Cytochrome P450"/>
    <property type="match status" value="1"/>
</dbReference>
<dbReference type="InterPro" id="IPR001128">
    <property type="entry name" value="Cyt_P450"/>
</dbReference>
<dbReference type="InterPro" id="IPR036396">
    <property type="entry name" value="Cyt_P450_sf"/>
</dbReference>
<dbReference type="PANTHER" id="PTHR46206">
    <property type="entry name" value="CYTOCHROME P450"/>
    <property type="match status" value="1"/>
</dbReference>
<dbReference type="PANTHER" id="PTHR46206:SF2">
    <property type="entry name" value="CYTOCHROME P450 MONOOXYGENASE AUSG-RELATED"/>
    <property type="match status" value="1"/>
</dbReference>
<dbReference type="Pfam" id="PF00067">
    <property type="entry name" value="p450"/>
    <property type="match status" value="1"/>
</dbReference>
<dbReference type="SUPFAM" id="SSF48264">
    <property type="entry name" value="Cytochrome P450"/>
    <property type="match status" value="1"/>
</dbReference>
<gene>
    <name evidence="4" type="primary">cpsC</name>
    <name type="ORF">P168DRAFT_243945</name>
</gene>
<accession>A0A2I1CSH6</accession>
<protein>
    <recommendedName>
        <fullName evidence="4">Cytochrome P450 monooxygenase cpsC</fullName>
        <ecNumber evidence="3">1.-.-.-</ecNumber>
    </recommendedName>
    <alternativeName>
        <fullName evidence="4">Campesines biosynthesis cluster protein C</fullName>
    </alternativeName>
</protein>
<proteinExistence type="evidence at protein level"/>
<reference key="1">
    <citation type="submission" date="2016-12" db="EMBL/GenBank/DDBJ databases">
        <title>The genomes of Aspergillus section Nigri reveals drivers in fungal speciation.</title>
        <authorList>
            <consortium name="DOE Joint Genome Institute"/>
            <person name="Vesth T.C."/>
            <person name="Nybo J."/>
            <person name="Theobald S."/>
            <person name="Brandl J."/>
            <person name="Frisvad J.C."/>
            <person name="Nielsen K.F."/>
            <person name="Lyhne E.K."/>
            <person name="Kogle M.E."/>
            <person name="Kuo A."/>
            <person name="Riley R."/>
            <person name="Clum A."/>
            <person name="Nolan M."/>
            <person name="Lipzen A."/>
            <person name="Salamov A."/>
            <person name="Henrissat B."/>
            <person name="Wiebenga A."/>
            <person name="De Vries R.P."/>
            <person name="Grigoriev I.V."/>
            <person name="Mortensen U.H."/>
            <person name="Andersen M.R."/>
            <person name="Baker S.E."/>
        </authorList>
    </citation>
    <scope>NUCLEOTIDE SEQUENCE [LARGE SCALE GENOMIC DNA]</scope>
    <source>
        <strain>IBT 28561</strain>
    </source>
</reference>
<reference key="2">
    <citation type="journal article" date="2024" name="Angew. Chem. Int. Ed.">
        <title>A Cytochrome P450 Catalyzes Oxidative Coupling Formation of Insecticidal Dimeric Indole Piperazine Alkaloids.</title>
        <authorList>
            <person name="He Q."/>
            <person name="Zhang H.R."/>
            <person name="Zou Y."/>
        </authorList>
    </citation>
    <scope>FUNCTION</scope>
    <scope>CATALYTIC ACTIVITY</scope>
    <scope>BIOTECHNOLOGY</scope>
    <scope>PATHWAY</scope>
</reference>